<comment type="function">
    <text evidence="1">Involved in the maturation of [NiFe] hydrogenases. Involved in the biosynthesis of the Fe(CN)(2)CO cofactor.</text>
</comment>
<comment type="cofactor">
    <cofactor evidence="1">
        <name>[4Fe-4S] cluster</name>
        <dbReference type="ChEBI" id="CHEBI:49883"/>
    </cofactor>
</comment>
<comment type="pathway">
    <text evidence="1">Protein modification; [NiFe] hydrogenase maturation.</text>
</comment>
<comment type="similarity">
    <text evidence="2">Belongs to the HypD family.</text>
</comment>
<comment type="sequence caution" evidence="2">
    <conflict type="erroneous initiation">
        <sequence resource="EMBL-CDS" id="BAC47001"/>
    </conflict>
</comment>
<sequence>MKYSSEFRDKTIAQGLARAIDAEVSSQRAYRFVEFCGGHTHAISRYGLEDLLPANVRMIHGPGCPVCVLPASRIDMAIRLAERPEVILCVYGDLMRAPGSQGQSLLLAKALGAHIRMVYSTLDAIRLAEQTPGREVVFFAIGFETTTPPTAVMIRIAEHKRLEGLSVFCNHVLTPSAMHRILENPKIRNTGGVPIDGFIGPAHVSTIVGTQPYEPMAEQFEKPIVVAGFEPLDVLQAVLMLVRQVNQNRHEVENQYSRAVTREGNRRAKEEVSQVFELREQFEWRGLGLVPNSGLKLKQSYAKFDAETRFAIHDLRVADNPACECCAILRGAKRPIDCKLFGNICTPETPIGACMVSSEGACAAYWTYRRVRDEQARQTS</sequence>
<accession>Q9ANP1</accession>
<organism>
    <name type="scientific">Bradyrhizobium diazoefficiens (strain JCM 10833 / BCRC 13528 / IAM 13628 / NBRC 14792 / USDA 110)</name>
    <dbReference type="NCBI Taxonomy" id="224911"/>
    <lineage>
        <taxon>Bacteria</taxon>
        <taxon>Pseudomonadati</taxon>
        <taxon>Pseudomonadota</taxon>
        <taxon>Alphaproteobacteria</taxon>
        <taxon>Hyphomicrobiales</taxon>
        <taxon>Nitrobacteraceae</taxon>
        <taxon>Bradyrhizobium</taxon>
    </lineage>
</organism>
<protein>
    <recommendedName>
        <fullName evidence="1">Hydrogenase maturation factor HypD1</fullName>
    </recommendedName>
</protein>
<feature type="chain" id="PRO_0000201449" description="Hydrogenase maturation factor HypD1">
    <location>
        <begin position="1"/>
        <end position="380"/>
    </location>
</feature>
<feature type="binding site" evidence="1">
    <location>
        <position position="36"/>
    </location>
    <ligand>
        <name>Fe cation</name>
        <dbReference type="ChEBI" id="CHEBI:24875"/>
    </ligand>
</feature>
<feature type="binding site" evidence="1">
    <location>
        <position position="64"/>
    </location>
    <ligand>
        <name>Fe cation</name>
        <dbReference type="ChEBI" id="CHEBI:24875"/>
    </ligand>
</feature>
<feature type="binding site" evidence="1">
    <location>
        <position position="67"/>
    </location>
    <ligand>
        <name>Fe cation</name>
        <dbReference type="ChEBI" id="CHEBI:24875"/>
    </ligand>
</feature>
<keyword id="KW-0004">4Fe-4S</keyword>
<keyword id="KW-0408">Iron</keyword>
<keyword id="KW-0411">Iron-sulfur</keyword>
<keyword id="KW-0479">Metal-binding</keyword>
<keyword id="KW-1185">Reference proteome</keyword>
<dbReference type="EMBL" id="AH010242">
    <property type="protein sequence ID" value="AAG60722.1"/>
    <property type="molecule type" value="Genomic_DNA"/>
</dbReference>
<dbReference type="EMBL" id="BA000040">
    <property type="protein sequence ID" value="BAC47001.1"/>
    <property type="status" value="ALT_INIT"/>
    <property type="molecule type" value="Genomic_DNA"/>
</dbReference>
<dbReference type="RefSeq" id="NP_768376.1">
    <property type="nucleotide sequence ID" value="NC_004463.1"/>
</dbReference>
<dbReference type="RefSeq" id="WP_028154318.1">
    <property type="nucleotide sequence ID" value="NZ_CP011360.1"/>
</dbReference>
<dbReference type="SMR" id="Q9ANP1"/>
<dbReference type="FunCoup" id="Q9ANP1">
    <property type="interactions" value="50"/>
</dbReference>
<dbReference type="STRING" id="224911.AAV28_05605"/>
<dbReference type="EnsemblBacteria" id="BAC47001">
    <property type="protein sequence ID" value="BAC47001"/>
    <property type="gene ID" value="BAC47001"/>
</dbReference>
<dbReference type="GeneID" id="92969980"/>
<dbReference type="KEGG" id="bja:blr1736"/>
<dbReference type="PATRIC" id="fig|224911.44.peg.1199"/>
<dbReference type="eggNOG" id="COG0409">
    <property type="taxonomic scope" value="Bacteria"/>
</dbReference>
<dbReference type="HOGENOM" id="CLU_048562_1_0_5"/>
<dbReference type="InParanoid" id="Q9ANP1"/>
<dbReference type="OrthoDB" id="9770424at2"/>
<dbReference type="UniPathway" id="UPA00335"/>
<dbReference type="Proteomes" id="UP000002526">
    <property type="component" value="Chromosome"/>
</dbReference>
<dbReference type="GO" id="GO:0051539">
    <property type="term" value="F:4 iron, 4 sulfur cluster binding"/>
    <property type="evidence" value="ECO:0000318"/>
    <property type="project" value="GO_Central"/>
</dbReference>
<dbReference type="GO" id="GO:0070025">
    <property type="term" value="F:carbon monoxide binding"/>
    <property type="evidence" value="ECO:0000318"/>
    <property type="project" value="GO_Central"/>
</dbReference>
<dbReference type="GO" id="GO:0005506">
    <property type="term" value="F:iron ion binding"/>
    <property type="evidence" value="ECO:0000318"/>
    <property type="project" value="GO_Central"/>
</dbReference>
<dbReference type="GO" id="GO:0051604">
    <property type="term" value="P:protein maturation"/>
    <property type="evidence" value="ECO:0000318"/>
    <property type="project" value="GO_Central"/>
</dbReference>
<dbReference type="Gene3D" id="6.10.20.100">
    <property type="match status" value="1"/>
</dbReference>
<dbReference type="Gene3D" id="3.40.50.11750">
    <property type="entry name" value="HypD, alpha/beta domain 1"/>
    <property type="match status" value="2"/>
</dbReference>
<dbReference type="InterPro" id="IPR002780">
    <property type="entry name" value="Hyd_form_HypD"/>
</dbReference>
<dbReference type="InterPro" id="IPR042243">
    <property type="entry name" value="HypD_1"/>
</dbReference>
<dbReference type="InterPro" id="IPR042244">
    <property type="entry name" value="HypD_2_sf"/>
</dbReference>
<dbReference type="NCBIfam" id="TIGR00075">
    <property type="entry name" value="hypD"/>
    <property type="match status" value="1"/>
</dbReference>
<dbReference type="PANTHER" id="PTHR30149:SF0">
    <property type="entry name" value="HYDROGENASE MATURATION FACTOR HYPD"/>
    <property type="match status" value="1"/>
</dbReference>
<dbReference type="PANTHER" id="PTHR30149">
    <property type="entry name" value="HYDROGENASE PROTEIN ASSEMBLY PROTEIN HYPD"/>
    <property type="match status" value="1"/>
</dbReference>
<dbReference type="Pfam" id="PF01924">
    <property type="entry name" value="HypD"/>
    <property type="match status" value="1"/>
</dbReference>
<dbReference type="PIRSF" id="PIRSF005622">
    <property type="entry name" value="Hydrgn_mat_hypD"/>
    <property type="match status" value="1"/>
</dbReference>
<reference key="1">
    <citation type="journal article" date="2001" name="J. Bacteriol.">
        <title>Potential symbiosis-specific genes uncovered by sequencing a 410-kb DNA region of the Bradyrhizobium japonicum chromosome.</title>
        <authorList>
            <person name="Goettfert M."/>
            <person name="Roethlisberger S."/>
            <person name="Kuendig C."/>
            <person name="Beck C."/>
            <person name="Marty R."/>
            <person name="Hennecke H."/>
        </authorList>
    </citation>
    <scope>NUCLEOTIDE SEQUENCE [GENOMIC DNA]</scope>
    <source>
        <strain>USDA 110spc4</strain>
    </source>
</reference>
<reference key="2">
    <citation type="journal article" date="2002" name="DNA Res.">
        <title>Complete genomic sequence of nitrogen-fixing symbiotic bacterium Bradyrhizobium japonicum USDA110.</title>
        <authorList>
            <person name="Kaneko T."/>
            <person name="Nakamura Y."/>
            <person name="Sato S."/>
            <person name="Minamisawa K."/>
            <person name="Uchiumi T."/>
            <person name="Sasamoto S."/>
            <person name="Watanabe A."/>
            <person name="Idesawa K."/>
            <person name="Iriguchi M."/>
            <person name="Kawashima K."/>
            <person name="Kohara M."/>
            <person name="Matsumoto M."/>
            <person name="Shimpo S."/>
            <person name="Tsuruoka H."/>
            <person name="Wada T."/>
            <person name="Yamada M."/>
            <person name="Tabata S."/>
        </authorList>
    </citation>
    <scope>NUCLEOTIDE SEQUENCE [LARGE SCALE GENOMIC DNA]</scope>
    <source>
        <strain>JCM 10833 / BCRC 13528 / IAM 13628 / NBRC 14792 / USDA 110</strain>
    </source>
</reference>
<name>HYPD1_BRADU</name>
<gene>
    <name type="primary">hypD1</name>
    <name type="synonym">hypD</name>
    <name type="ordered locus">blr1736</name>
</gene>
<evidence type="ECO:0000250" key="1">
    <source>
        <dbReference type="UniProtKB" id="P24192"/>
    </source>
</evidence>
<evidence type="ECO:0000305" key="2"/>
<proteinExistence type="inferred from homology"/>